<comment type="function">
    <text evidence="1">Modulates transcription in response to changes in cellular NADH/NAD(+) redox state.</text>
</comment>
<comment type="subunit">
    <text evidence="1">Homodimer.</text>
</comment>
<comment type="subcellular location">
    <subcellularLocation>
        <location evidence="1">Cytoplasm</location>
    </subcellularLocation>
</comment>
<comment type="similarity">
    <text evidence="1">Belongs to the transcriptional regulatory Rex family.</text>
</comment>
<protein>
    <recommendedName>
        <fullName evidence="1">Redox-sensing transcriptional repressor Rex</fullName>
    </recommendedName>
</protein>
<dbReference type="EMBL" id="AE004092">
    <property type="protein sequence ID" value="AAK33995.1"/>
    <property type="molecule type" value="Genomic_DNA"/>
</dbReference>
<dbReference type="EMBL" id="CP000017">
    <property type="protein sequence ID" value="AAZ51460.1"/>
    <property type="molecule type" value="Genomic_DNA"/>
</dbReference>
<dbReference type="RefSeq" id="NP_269274.1">
    <property type="nucleotide sequence ID" value="NC_002737.2"/>
</dbReference>
<dbReference type="SMR" id="P60388"/>
<dbReference type="PaxDb" id="1314-HKU360_00906"/>
<dbReference type="KEGG" id="spy:SPy_1120"/>
<dbReference type="KEGG" id="spz:M5005_Spy0842"/>
<dbReference type="PATRIC" id="fig|160490.10.peg.974"/>
<dbReference type="HOGENOM" id="CLU_061534_1_1_9"/>
<dbReference type="OMA" id="HEQRKAG"/>
<dbReference type="Proteomes" id="UP000000750">
    <property type="component" value="Chromosome"/>
</dbReference>
<dbReference type="GO" id="GO:0005737">
    <property type="term" value="C:cytoplasm"/>
    <property type="evidence" value="ECO:0007669"/>
    <property type="project" value="UniProtKB-SubCell"/>
</dbReference>
<dbReference type="GO" id="GO:0003677">
    <property type="term" value="F:DNA binding"/>
    <property type="evidence" value="ECO:0007669"/>
    <property type="project" value="UniProtKB-UniRule"/>
</dbReference>
<dbReference type="GO" id="GO:0003700">
    <property type="term" value="F:DNA-binding transcription factor activity"/>
    <property type="evidence" value="ECO:0007669"/>
    <property type="project" value="UniProtKB-UniRule"/>
</dbReference>
<dbReference type="GO" id="GO:0045892">
    <property type="term" value="P:negative regulation of DNA-templated transcription"/>
    <property type="evidence" value="ECO:0007669"/>
    <property type="project" value="InterPro"/>
</dbReference>
<dbReference type="GO" id="GO:0051775">
    <property type="term" value="P:response to redox state"/>
    <property type="evidence" value="ECO:0007669"/>
    <property type="project" value="InterPro"/>
</dbReference>
<dbReference type="Gene3D" id="3.40.50.720">
    <property type="entry name" value="NAD(P)-binding Rossmann-like Domain"/>
    <property type="match status" value="1"/>
</dbReference>
<dbReference type="Gene3D" id="1.10.10.10">
    <property type="entry name" value="Winged helix-like DNA-binding domain superfamily/Winged helix DNA-binding domain"/>
    <property type="match status" value="1"/>
</dbReference>
<dbReference type="HAMAP" id="MF_01131">
    <property type="entry name" value="Rex"/>
    <property type="match status" value="1"/>
</dbReference>
<dbReference type="InterPro" id="IPR003781">
    <property type="entry name" value="CoA-bd"/>
</dbReference>
<dbReference type="InterPro" id="IPR036291">
    <property type="entry name" value="NAD(P)-bd_dom_sf"/>
</dbReference>
<dbReference type="InterPro" id="IPR009718">
    <property type="entry name" value="Rex_DNA-bd_C_dom"/>
</dbReference>
<dbReference type="InterPro" id="IPR022876">
    <property type="entry name" value="Tscrpt_rep_Rex"/>
</dbReference>
<dbReference type="InterPro" id="IPR036388">
    <property type="entry name" value="WH-like_DNA-bd_sf"/>
</dbReference>
<dbReference type="InterPro" id="IPR036390">
    <property type="entry name" value="WH_DNA-bd_sf"/>
</dbReference>
<dbReference type="NCBIfam" id="NF003988">
    <property type="entry name" value="PRK05472.1-1"/>
    <property type="match status" value="1"/>
</dbReference>
<dbReference type="NCBIfam" id="NF003989">
    <property type="entry name" value="PRK05472.1-3"/>
    <property type="match status" value="1"/>
</dbReference>
<dbReference type="NCBIfam" id="NF003991">
    <property type="entry name" value="PRK05472.1-5"/>
    <property type="match status" value="1"/>
</dbReference>
<dbReference type="NCBIfam" id="NF003994">
    <property type="entry name" value="PRK05472.2-3"/>
    <property type="match status" value="1"/>
</dbReference>
<dbReference type="NCBIfam" id="NF003995">
    <property type="entry name" value="PRK05472.2-4"/>
    <property type="match status" value="1"/>
</dbReference>
<dbReference type="NCBIfam" id="NF003996">
    <property type="entry name" value="PRK05472.2-5"/>
    <property type="match status" value="1"/>
</dbReference>
<dbReference type="PANTHER" id="PTHR35786">
    <property type="entry name" value="REDOX-SENSING TRANSCRIPTIONAL REPRESSOR REX"/>
    <property type="match status" value="1"/>
</dbReference>
<dbReference type="PANTHER" id="PTHR35786:SF1">
    <property type="entry name" value="REDOX-SENSING TRANSCRIPTIONAL REPRESSOR REX 1"/>
    <property type="match status" value="1"/>
</dbReference>
<dbReference type="Pfam" id="PF02629">
    <property type="entry name" value="CoA_binding"/>
    <property type="match status" value="1"/>
</dbReference>
<dbReference type="Pfam" id="PF06971">
    <property type="entry name" value="Put_DNA-bind_N"/>
    <property type="match status" value="1"/>
</dbReference>
<dbReference type="SMART" id="SM00881">
    <property type="entry name" value="CoA_binding"/>
    <property type="match status" value="1"/>
</dbReference>
<dbReference type="SUPFAM" id="SSF51735">
    <property type="entry name" value="NAD(P)-binding Rossmann-fold domains"/>
    <property type="match status" value="1"/>
</dbReference>
<dbReference type="SUPFAM" id="SSF46785">
    <property type="entry name" value="Winged helix' DNA-binding domain"/>
    <property type="match status" value="1"/>
</dbReference>
<reference key="1">
    <citation type="journal article" date="2001" name="Proc. Natl. Acad. Sci. U.S.A.">
        <title>Complete genome sequence of an M1 strain of Streptococcus pyogenes.</title>
        <authorList>
            <person name="Ferretti J.J."/>
            <person name="McShan W.M."/>
            <person name="Ajdic D.J."/>
            <person name="Savic D.J."/>
            <person name="Savic G."/>
            <person name="Lyon K."/>
            <person name="Primeaux C."/>
            <person name="Sezate S."/>
            <person name="Suvorov A.N."/>
            <person name="Kenton S."/>
            <person name="Lai H.S."/>
            <person name="Lin S.P."/>
            <person name="Qian Y."/>
            <person name="Jia H.G."/>
            <person name="Najar F.Z."/>
            <person name="Ren Q."/>
            <person name="Zhu H."/>
            <person name="Song L."/>
            <person name="White J."/>
            <person name="Yuan X."/>
            <person name="Clifton S.W."/>
            <person name="Roe B.A."/>
            <person name="McLaughlin R.E."/>
        </authorList>
    </citation>
    <scope>NUCLEOTIDE SEQUENCE [LARGE SCALE GENOMIC DNA]</scope>
    <source>
        <strain>ATCC 700294 / SF370 / Serotype M1</strain>
    </source>
</reference>
<reference key="2">
    <citation type="journal article" date="2005" name="J. Infect. Dis.">
        <title>Evolutionary origin and emergence of a highly successful clone of serotype M1 group A Streptococcus involved multiple horizontal gene transfer events.</title>
        <authorList>
            <person name="Sumby P."/>
            <person name="Porcella S.F."/>
            <person name="Madrigal A.G."/>
            <person name="Barbian K.D."/>
            <person name="Virtaneva K."/>
            <person name="Ricklefs S.M."/>
            <person name="Sturdevant D.E."/>
            <person name="Graham M.R."/>
            <person name="Vuopio-Varkila J."/>
            <person name="Hoe N.P."/>
            <person name="Musser J.M."/>
        </authorList>
    </citation>
    <scope>NUCLEOTIDE SEQUENCE [LARGE SCALE GENOMIC DNA]</scope>
    <source>
        <strain>ATCC BAA-947 / MGAS5005 / Serotype M1</strain>
    </source>
</reference>
<evidence type="ECO:0000255" key="1">
    <source>
        <dbReference type="HAMAP-Rule" id="MF_01131"/>
    </source>
</evidence>
<accession>P60388</accession>
<accession>Q48YW2</accession>
<accession>Q99ZR3</accession>
<keyword id="KW-0963">Cytoplasm</keyword>
<keyword id="KW-0238">DNA-binding</keyword>
<keyword id="KW-0520">NAD</keyword>
<keyword id="KW-1185">Reference proteome</keyword>
<keyword id="KW-0678">Repressor</keyword>
<keyword id="KW-0804">Transcription</keyword>
<keyword id="KW-0805">Transcription regulation</keyword>
<name>REX_STRP1</name>
<proteinExistence type="inferred from homology"/>
<sequence>MVIDKSIPKATAKRLSLYYRIFKRFHADQVEKASSKQIADAMGIDSATVRRDFSYFGELGRRGFGYDVTKLMNFFADLLNDHSTTNVILVGCGNIGRALLHYRFHDRNKMQIAMGFDTDDNALVGTKTADNIPVHGISSVKERIANTDIETAILTVPSIHAQEVTDQLIEAGIKGILSFAPVHLQVPKGVIVQSVDLTSELQTLLYFMNQNHLD</sequence>
<feature type="chain" id="PRO_0000097920" description="Redox-sensing transcriptional repressor Rex">
    <location>
        <begin position="1"/>
        <end position="214"/>
    </location>
</feature>
<feature type="DNA-binding region" description="H-T-H motif" evidence="1">
    <location>
        <begin position="17"/>
        <end position="56"/>
    </location>
</feature>
<feature type="binding site" evidence="1">
    <location>
        <begin position="91"/>
        <end position="96"/>
    </location>
    <ligand>
        <name>NAD(+)</name>
        <dbReference type="ChEBI" id="CHEBI:57540"/>
    </ligand>
</feature>
<gene>
    <name evidence="1" type="primary">rex</name>
    <name type="ordered locus">SPy_1120</name>
    <name type="ordered locus">M5005_Spy0842</name>
</gene>
<organism>
    <name type="scientific">Streptococcus pyogenes serotype M1</name>
    <dbReference type="NCBI Taxonomy" id="301447"/>
    <lineage>
        <taxon>Bacteria</taxon>
        <taxon>Bacillati</taxon>
        <taxon>Bacillota</taxon>
        <taxon>Bacilli</taxon>
        <taxon>Lactobacillales</taxon>
        <taxon>Streptococcaceae</taxon>
        <taxon>Streptococcus</taxon>
    </lineage>
</organism>